<name>RS20_META1</name>
<gene>
    <name evidence="1" type="primary">rpsT</name>
    <name type="ordered locus">MARTH_orf244</name>
</gene>
<proteinExistence type="inferred from homology"/>
<evidence type="ECO:0000255" key="1">
    <source>
        <dbReference type="HAMAP-Rule" id="MF_00500"/>
    </source>
</evidence>
<evidence type="ECO:0000256" key="2">
    <source>
        <dbReference type="SAM" id="MobiDB-lite"/>
    </source>
</evidence>
<evidence type="ECO:0000305" key="3"/>
<accession>B3PMA0</accession>
<dbReference type="EMBL" id="CP001047">
    <property type="protein sequence ID" value="ACF07152.1"/>
    <property type="molecule type" value="Genomic_DNA"/>
</dbReference>
<dbReference type="RefSeq" id="WP_012498109.1">
    <property type="nucleotide sequence ID" value="NC_011025.1"/>
</dbReference>
<dbReference type="SMR" id="B3PMA0"/>
<dbReference type="STRING" id="243272.MARTH_orf244"/>
<dbReference type="KEGG" id="mat:MARTH_orf244"/>
<dbReference type="eggNOG" id="COG0268">
    <property type="taxonomic scope" value="Bacteria"/>
</dbReference>
<dbReference type="HOGENOM" id="CLU_160655_1_2_14"/>
<dbReference type="Proteomes" id="UP000008812">
    <property type="component" value="Chromosome"/>
</dbReference>
<dbReference type="GO" id="GO:0005829">
    <property type="term" value="C:cytosol"/>
    <property type="evidence" value="ECO:0007669"/>
    <property type="project" value="TreeGrafter"/>
</dbReference>
<dbReference type="GO" id="GO:0015935">
    <property type="term" value="C:small ribosomal subunit"/>
    <property type="evidence" value="ECO:0007669"/>
    <property type="project" value="TreeGrafter"/>
</dbReference>
<dbReference type="GO" id="GO:0070181">
    <property type="term" value="F:small ribosomal subunit rRNA binding"/>
    <property type="evidence" value="ECO:0007669"/>
    <property type="project" value="TreeGrafter"/>
</dbReference>
<dbReference type="GO" id="GO:0003735">
    <property type="term" value="F:structural constituent of ribosome"/>
    <property type="evidence" value="ECO:0007669"/>
    <property type="project" value="InterPro"/>
</dbReference>
<dbReference type="GO" id="GO:0006412">
    <property type="term" value="P:translation"/>
    <property type="evidence" value="ECO:0007669"/>
    <property type="project" value="UniProtKB-UniRule"/>
</dbReference>
<dbReference type="Gene3D" id="1.20.58.110">
    <property type="entry name" value="Ribosomal protein S20"/>
    <property type="match status" value="1"/>
</dbReference>
<dbReference type="HAMAP" id="MF_00500">
    <property type="entry name" value="Ribosomal_bS20"/>
    <property type="match status" value="1"/>
</dbReference>
<dbReference type="InterPro" id="IPR002583">
    <property type="entry name" value="Ribosomal_bS20"/>
</dbReference>
<dbReference type="InterPro" id="IPR036510">
    <property type="entry name" value="Ribosomal_bS20_sf"/>
</dbReference>
<dbReference type="NCBIfam" id="TIGR00029">
    <property type="entry name" value="S20"/>
    <property type="match status" value="1"/>
</dbReference>
<dbReference type="PANTHER" id="PTHR33398">
    <property type="entry name" value="30S RIBOSOMAL PROTEIN S20"/>
    <property type="match status" value="1"/>
</dbReference>
<dbReference type="PANTHER" id="PTHR33398:SF1">
    <property type="entry name" value="SMALL RIBOSOMAL SUBUNIT PROTEIN BS20C"/>
    <property type="match status" value="1"/>
</dbReference>
<dbReference type="Pfam" id="PF01649">
    <property type="entry name" value="Ribosomal_S20p"/>
    <property type="match status" value="1"/>
</dbReference>
<dbReference type="SUPFAM" id="SSF46992">
    <property type="entry name" value="Ribosomal protein S20"/>
    <property type="match status" value="1"/>
</dbReference>
<sequence length="87" mass="9555">MANIKSKQKAILYNQKANAYNSAVKSTVKTAIKKAKLAADQQDAKLSDFVSKAHHEIDKAVSKGVLHKNNGSRKASRLDAYVQSKQQ</sequence>
<feature type="chain" id="PRO_1000126479" description="Small ribosomal subunit protein bS20">
    <location>
        <begin position="1"/>
        <end position="87"/>
    </location>
</feature>
<feature type="region of interest" description="Disordered" evidence="2">
    <location>
        <begin position="67"/>
        <end position="87"/>
    </location>
</feature>
<protein>
    <recommendedName>
        <fullName evidence="1">Small ribosomal subunit protein bS20</fullName>
    </recommendedName>
    <alternativeName>
        <fullName evidence="3">30S ribosomal protein S20</fullName>
    </alternativeName>
</protein>
<organism>
    <name type="scientific">Metamycoplasma arthritidis (strain 158L3-1)</name>
    <name type="common">Mycoplasma arthritidis</name>
    <dbReference type="NCBI Taxonomy" id="243272"/>
    <lineage>
        <taxon>Bacteria</taxon>
        <taxon>Bacillati</taxon>
        <taxon>Mycoplasmatota</taxon>
        <taxon>Mycoplasmoidales</taxon>
        <taxon>Metamycoplasmataceae</taxon>
        <taxon>Metamycoplasma</taxon>
    </lineage>
</organism>
<reference key="1">
    <citation type="journal article" date="2008" name="Infect. Immun.">
        <title>Genome of Mycoplasma arthritidis.</title>
        <authorList>
            <person name="Dybvig K."/>
            <person name="Zuhua C."/>
            <person name="Lao P."/>
            <person name="Jordan D.S."/>
            <person name="French C.T."/>
            <person name="Tu A.H."/>
            <person name="Loraine A.E."/>
        </authorList>
    </citation>
    <scope>NUCLEOTIDE SEQUENCE [LARGE SCALE GENOMIC DNA]</scope>
    <source>
        <strain>158L3-1</strain>
    </source>
</reference>
<comment type="function">
    <text evidence="1">Binds directly to 16S ribosomal RNA.</text>
</comment>
<comment type="similarity">
    <text evidence="1">Belongs to the bacterial ribosomal protein bS20 family.</text>
</comment>
<keyword id="KW-1185">Reference proteome</keyword>
<keyword id="KW-0687">Ribonucleoprotein</keyword>
<keyword id="KW-0689">Ribosomal protein</keyword>
<keyword id="KW-0694">RNA-binding</keyword>
<keyword id="KW-0699">rRNA-binding</keyword>